<sequence length="302" mass="32673">MQTPEIKEGTEQYLWRRKTMNPGDKGVKRKGSDRQREKMSVIVMAGTEDARRIISRLSGMPWVEVTATATTEHGSDLAEKSGASRTVTGALDSDGLRELMADLDACILIDATHPFAAQATENALRACRETGTIYVRFERPEVIPDGVIRVGSFREAGEVASSLIGDGEVVMHLAGVSTLGDVLRSLEPERVAVRVLPSTSSIEKCLQLGVPPSHIIAMQGRFSAEMNLALLREYRAGAVITKESGETGGLPEKVEAASELGIPVILVERPEVNLEGEAVFGNINDLMDHVLKILRDMGQPGD</sequence>
<reference key="1">
    <citation type="journal article" date="1997" name="J. Bacteriol.">
        <title>Complete genome sequence of Methanobacterium thermoautotrophicum deltaH: functional analysis and comparative genomics.</title>
        <authorList>
            <person name="Smith D.R."/>
            <person name="Doucette-Stamm L.A."/>
            <person name="Deloughery C."/>
            <person name="Lee H.-M."/>
            <person name="Dubois J."/>
            <person name="Aldredge T."/>
            <person name="Bashirzadeh R."/>
            <person name="Blakely D."/>
            <person name="Cook R."/>
            <person name="Gilbert K."/>
            <person name="Harrison D."/>
            <person name="Hoang L."/>
            <person name="Keagle P."/>
            <person name="Lumm W."/>
            <person name="Pothier B."/>
            <person name="Qiu D."/>
            <person name="Spadafora R."/>
            <person name="Vicare R."/>
            <person name="Wang Y."/>
            <person name="Wierzbowski J."/>
            <person name="Gibson R."/>
            <person name="Jiwani N."/>
            <person name="Caruso A."/>
            <person name="Bush D."/>
            <person name="Safer H."/>
            <person name="Patwell D."/>
            <person name="Prabhakar S."/>
            <person name="McDougall S."/>
            <person name="Shimer G."/>
            <person name="Goyal A."/>
            <person name="Pietrovski S."/>
            <person name="Church G.M."/>
            <person name="Daniels C.J."/>
            <person name="Mao J.-I."/>
            <person name="Rice P."/>
            <person name="Noelling J."/>
            <person name="Reeve J.N."/>
        </authorList>
    </citation>
    <scope>NUCLEOTIDE SEQUENCE [LARGE SCALE GENOMIC DNA]</scope>
    <source>
        <strain>ATCC 29096 / DSM 1053 / JCM 10044 / NBRC 100330 / Delta H</strain>
    </source>
</reference>
<name>CBIJ_METTH</name>
<comment type="function">
    <text evidence="1">Catalyzes the reduction of the macrocycle of cobalt-precorrin-6A to cobalt-precorrin-6B.</text>
</comment>
<comment type="catalytic activity">
    <reaction>
        <text>Co-precorrin-6B + NAD(+) = Co-precorrin-6A + NADH + H(+)</text>
        <dbReference type="Rhea" id="RHEA:15625"/>
        <dbReference type="ChEBI" id="CHEBI:15378"/>
        <dbReference type="ChEBI" id="CHEBI:57540"/>
        <dbReference type="ChEBI" id="CHEBI:57945"/>
        <dbReference type="ChEBI" id="CHEBI:60064"/>
        <dbReference type="ChEBI" id="CHEBI:72780"/>
        <dbReference type="EC" id="1.3.1.106"/>
    </reaction>
</comment>
<comment type="pathway">
    <text>Cofactor biosynthesis; adenosylcobalamin biosynthesis; cob(II)yrinate a,c-diamide from sirohydrochlorin (anaerobic route): step 7/10.</text>
</comment>
<comment type="similarity">
    <text evidence="2">Belongs to the precorrin-6x reductase family.</text>
</comment>
<accession>O27083</accession>
<keyword id="KW-0169">Cobalamin biosynthesis</keyword>
<keyword id="KW-0520">NAD</keyword>
<keyword id="KW-0560">Oxidoreductase</keyword>
<keyword id="KW-1185">Reference proteome</keyword>
<evidence type="ECO:0000250" key="1"/>
<evidence type="ECO:0000255" key="2">
    <source>
        <dbReference type="PROSITE-ProRule" id="PRU00356"/>
    </source>
</evidence>
<evidence type="ECO:0000256" key="3">
    <source>
        <dbReference type="SAM" id="MobiDB-lite"/>
    </source>
</evidence>
<feature type="chain" id="PRO_0000135918" description="Cobalt-precorrin-6A reductase">
    <location>
        <begin position="1"/>
        <end position="302"/>
    </location>
</feature>
<feature type="region of interest" description="Disordered" evidence="3">
    <location>
        <begin position="1"/>
        <end position="37"/>
    </location>
</feature>
<feature type="compositionally biased region" description="Basic and acidic residues" evidence="3">
    <location>
        <begin position="1"/>
        <end position="10"/>
    </location>
</feature>
<organism>
    <name type="scientific">Methanothermobacter thermautotrophicus (strain ATCC 29096 / DSM 1053 / JCM 10044 / NBRC 100330 / Delta H)</name>
    <name type="common">Methanobacterium thermoautotrophicum</name>
    <dbReference type="NCBI Taxonomy" id="187420"/>
    <lineage>
        <taxon>Archaea</taxon>
        <taxon>Methanobacteriati</taxon>
        <taxon>Methanobacteriota</taxon>
        <taxon>Methanomada group</taxon>
        <taxon>Methanobacteria</taxon>
        <taxon>Methanobacteriales</taxon>
        <taxon>Methanobacteriaceae</taxon>
        <taxon>Methanothermobacter</taxon>
    </lineage>
</organism>
<dbReference type="EC" id="1.3.1.106"/>
<dbReference type="EMBL" id="AE000666">
    <property type="protein sequence ID" value="AAB85498.1"/>
    <property type="molecule type" value="Genomic_DNA"/>
</dbReference>
<dbReference type="PIR" id="F69000">
    <property type="entry name" value="F69000"/>
</dbReference>
<dbReference type="SMR" id="O27083"/>
<dbReference type="FunCoup" id="O27083">
    <property type="interactions" value="90"/>
</dbReference>
<dbReference type="STRING" id="187420.MTH_1002"/>
<dbReference type="PaxDb" id="187420-MTH_1002"/>
<dbReference type="EnsemblBacteria" id="AAB85498">
    <property type="protein sequence ID" value="AAB85498"/>
    <property type="gene ID" value="MTH_1002"/>
</dbReference>
<dbReference type="KEGG" id="mth:MTH_1002"/>
<dbReference type="PATRIC" id="fig|187420.15.peg.985"/>
<dbReference type="HOGENOM" id="CLU_068627_0_0_2"/>
<dbReference type="InParanoid" id="O27083"/>
<dbReference type="UniPathway" id="UPA00148">
    <property type="reaction ID" value="UER00228"/>
</dbReference>
<dbReference type="Proteomes" id="UP000005223">
    <property type="component" value="Chromosome"/>
</dbReference>
<dbReference type="GO" id="GO:0016994">
    <property type="term" value="F:precorrin-6A reductase activity"/>
    <property type="evidence" value="ECO:0007669"/>
    <property type="project" value="InterPro"/>
</dbReference>
<dbReference type="GO" id="GO:0009236">
    <property type="term" value="P:cobalamin biosynthetic process"/>
    <property type="evidence" value="ECO:0007669"/>
    <property type="project" value="UniProtKB-UniPathway"/>
</dbReference>
<dbReference type="InterPro" id="IPR003723">
    <property type="entry name" value="Precorrin-6x_reduct"/>
</dbReference>
<dbReference type="NCBIfam" id="TIGR00715">
    <property type="entry name" value="precor6x_red"/>
    <property type="match status" value="1"/>
</dbReference>
<dbReference type="PANTHER" id="PTHR36925">
    <property type="entry name" value="COBALT-PRECORRIN-6A REDUCTASE"/>
    <property type="match status" value="1"/>
</dbReference>
<dbReference type="PANTHER" id="PTHR36925:SF1">
    <property type="entry name" value="COBALT-PRECORRIN-6A REDUCTASE"/>
    <property type="match status" value="1"/>
</dbReference>
<dbReference type="Pfam" id="PF02571">
    <property type="entry name" value="CbiJ"/>
    <property type="match status" value="1"/>
</dbReference>
<dbReference type="PROSITE" id="PS51014">
    <property type="entry name" value="COBK_CBIJ"/>
    <property type="match status" value="1"/>
</dbReference>
<protein>
    <recommendedName>
        <fullName>Cobalt-precorrin-6A reductase</fullName>
        <ecNumber>1.3.1.106</ecNumber>
    </recommendedName>
</protein>
<gene>
    <name type="primary">cbiJ</name>
    <name type="synonym">cobK</name>
    <name type="ordered locus">MTH_1002</name>
</gene>
<proteinExistence type="inferred from homology"/>